<sequence>MSKSIEQFPKDLSSPLIQLKSSVEKNSKLHIKELFALEPERFQNYSVKFDQLFFDYSKQRITKNILEQLVALANNKQLTQWINRLFSQDKINCTEQREAMHWALRLPSEYSKFPELTKQVHIQLQRMYTLVEKIHAGQYRGATGEVIQDVVNIGVGGSDLGPHMVTHALADFKVKTAKPLNVHFVSTMDGSQLSDLLHQLRPETTLFIISSKSFGTIDTLSNAQTVRQWLEKALGKHDRVVKSHFIGVSTKAEKMNEWGIAPDNQLLLWDWVGGRYSLWSCIGFPIALTIGIDGFQQLLAGAHAVDEHFQNTSFERNIPVLMALLGIWNNNFLNIQTHAVLPYDGRLKYLAAYLQQLEMESNGKSVQRDGQKVELDTCPIVWGEVGPNAQHAFYQLLHQGTQAVSCDFIAPIQRYNADHFTYVENAEALIEQHHLALSNCLAQSRLLAFGNEALDVKELEKLPIYKQYEGNQPSSTLLLDELNPYNLGMLIALYEHKVFVQSVIWNINPFDQWGVEKGKQIANQLLPILNGAQNDLSTLDASTRGLIKILLGKAE</sequence>
<dbReference type="EC" id="5.3.1.9" evidence="1"/>
<dbReference type="EMBL" id="CP001172">
    <property type="protein sequence ID" value="ACJ57888.1"/>
    <property type="molecule type" value="Genomic_DNA"/>
</dbReference>
<dbReference type="RefSeq" id="WP_000045515.1">
    <property type="nucleotide sequence ID" value="NZ_CP001172.1"/>
</dbReference>
<dbReference type="SMR" id="B7H2H4"/>
<dbReference type="HOGENOM" id="CLU_017947_3_1_6"/>
<dbReference type="UniPathway" id="UPA00109">
    <property type="reaction ID" value="UER00181"/>
</dbReference>
<dbReference type="UniPathway" id="UPA00138"/>
<dbReference type="Proteomes" id="UP000006924">
    <property type="component" value="Chromosome"/>
</dbReference>
<dbReference type="GO" id="GO:0005829">
    <property type="term" value="C:cytosol"/>
    <property type="evidence" value="ECO:0007669"/>
    <property type="project" value="TreeGrafter"/>
</dbReference>
<dbReference type="GO" id="GO:0097367">
    <property type="term" value="F:carbohydrate derivative binding"/>
    <property type="evidence" value="ECO:0007669"/>
    <property type="project" value="InterPro"/>
</dbReference>
<dbReference type="GO" id="GO:0004347">
    <property type="term" value="F:glucose-6-phosphate isomerase activity"/>
    <property type="evidence" value="ECO:0007669"/>
    <property type="project" value="UniProtKB-UniRule"/>
</dbReference>
<dbReference type="GO" id="GO:0048029">
    <property type="term" value="F:monosaccharide binding"/>
    <property type="evidence" value="ECO:0007669"/>
    <property type="project" value="TreeGrafter"/>
</dbReference>
<dbReference type="GO" id="GO:0006094">
    <property type="term" value="P:gluconeogenesis"/>
    <property type="evidence" value="ECO:0007669"/>
    <property type="project" value="UniProtKB-UniRule"/>
</dbReference>
<dbReference type="GO" id="GO:0051156">
    <property type="term" value="P:glucose 6-phosphate metabolic process"/>
    <property type="evidence" value="ECO:0007669"/>
    <property type="project" value="TreeGrafter"/>
</dbReference>
<dbReference type="GO" id="GO:0006096">
    <property type="term" value="P:glycolytic process"/>
    <property type="evidence" value="ECO:0007669"/>
    <property type="project" value="UniProtKB-UniRule"/>
</dbReference>
<dbReference type="CDD" id="cd05015">
    <property type="entry name" value="SIS_PGI_1"/>
    <property type="match status" value="1"/>
</dbReference>
<dbReference type="CDD" id="cd05016">
    <property type="entry name" value="SIS_PGI_2"/>
    <property type="match status" value="1"/>
</dbReference>
<dbReference type="Gene3D" id="1.10.1390.10">
    <property type="match status" value="1"/>
</dbReference>
<dbReference type="Gene3D" id="3.40.50.10490">
    <property type="entry name" value="Glucose-6-phosphate isomerase like protein, domain 1"/>
    <property type="match status" value="2"/>
</dbReference>
<dbReference type="HAMAP" id="MF_00473">
    <property type="entry name" value="G6P_isomerase"/>
    <property type="match status" value="1"/>
</dbReference>
<dbReference type="InterPro" id="IPR001672">
    <property type="entry name" value="G6P_Isomerase"/>
</dbReference>
<dbReference type="InterPro" id="IPR023096">
    <property type="entry name" value="G6P_Isomerase_C"/>
</dbReference>
<dbReference type="InterPro" id="IPR018189">
    <property type="entry name" value="Phosphoglucose_isomerase_CS"/>
</dbReference>
<dbReference type="InterPro" id="IPR046348">
    <property type="entry name" value="SIS_dom_sf"/>
</dbReference>
<dbReference type="InterPro" id="IPR035476">
    <property type="entry name" value="SIS_PGI_1"/>
</dbReference>
<dbReference type="InterPro" id="IPR035482">
    <property type="entry name" value="SIS_PGI_2"/>
</dbReference>
<dbReference type="NCBIfam" id="NF001211">
    <property type="entry name" value="PRK00179.1"/>
    <property type="match status" value="1"/>
</dbReference>
<dbReference type="PANTHER" id="PTHR11469">
    <property type="entry name" value="GLUCOSE-6-PHOSPHATE ISOMERASE"/>
    <property type="match status" value="1"/>
</dbReference>
<dbReference type="PANTHER" id="PTHR11469:SF1">
    <property type="entry name" value="GLUCOSE-6-PHOSPHATE ISOMERASE"/>
    <property type="match status" value="1"/>
</dbReference>
<dbReference type="Pfam" id="PF00342">
    <property type="entry name" value="PGI"/>
    <property type="match status" value="1"/>
</dbReference>
<dbReference type="PRINTS" id="PR00662">
    <property type="entry name" value="G6PISOMERASE"/>
</dbReference>
<dbReference type="SUPFAM" id="SSF53697">
    <property type="entry name" value="SIS domain"/>
    <property type="match status" value="1"/>
</dbReference>
<dbReference type="PROSITE" id="PS00765">
    <property type="entry name" value="P_GLUCOSE_ISOMERASE_1"/>
    <property type="match status" value="1"/>
</dbReference>
<dbReference type="PROSITE" id="PS00174">
    <property type="entry name" value="P_GLUCOSE_ISOMERASE_2"/>
    <property type="match status" value="1"/>
</dbReference>
<dbReference type="PROSITE" id="PS51463">
    <property type="entry name" value="P_GLUCOSE_ISOMERASE_3"/>
    <property type="match status" value="1"/>
</dbReference>
<comment type="function">
    <text evidence="1">Catalyzes the reversible isomerization of glucose-6-phosphate to fructose-6-phosphate.</text>
</comment>
<comment type="catalytic activity">
    <reaction evidence="1">
        <text>alpha-D-glucose 6-phosphate = beta-D-fructose 6-phosphate</text>
        <dbReference type="Rhea" id="RHEA:11816"/>
        <dbReference type="ChEBI" id="CHEBI:57634"/>
        <dbReference type="ChEBI" id="CHEBI:58225"/>
        <dbReference type="EC" id="5.3.1.9"/>
    </reaction>
</comment>
<comment type="pathway">
    <text evidence="1">Carbohydrate biosynthesis; gluconeogenesis.</text>
</comment>
<comment type="pathway">
    <text evidence="1">Carbohydrate degradation; glycolysis; D-glyceraldehyde 3-phosphate and glycerone phosphate from D-glucose: step 2/4.</text>
</comment>
<comment type="subcellular location">
    <subcellularLocation>
        <location evidence="1">Cytoplasm</location>
    </subcellularLocation>
</comment>
<comment type="similarity">
    <text evidence="1">Belongs to the GPI family.</text>
</comment>
<accession>B7H2H4</accession>
<gene>
    <name evidence="1" type="primary">pgi</name>
    <name type="ordered locus">ABBFA_003447</name>
</gene>
<proteinExistence type="inferred from homology"/>
<protein>
    <recommendedName>
        <fullName evidence="1">Glucose-6-phosphate isomerase</fullName>
        <shortName evidence="1">GPI</shortName>
        <ecNumber evidence="1">5.3.1.9</ecNumber>
    </recommendedName>
    <alternativeName>
        <fullName evidence="1">Phosphoglucose isomerase</fullName>
        <shortName evidence="1">PGI</shortName>
    </alternativeName>
    <alternativeName>
        <fullName evidence="1">Phosphohexose isomerase</fullName>
        <shortName evidence="1">PHI</shortName>
    </alternativeName>
</protein>
<feature type="chain" id="PRO_1000125680" description="Glucose-6-phosphate isomerase">
    <location>
        <begin position="1"/>
        <end position="555"/>
    </location>
</feature>
<feature type="active site" description="Proton donor" evidence="1">
    <location>
        <position position="360"/>
    </location>
</feature>
<feature type="active site" evidence="1">
    <location>
        <position position="391"/>
    </location>
</feature>
<feature type="active site" evidence="1">
    <location>
        <position position="519"/>
    </location>
</feature>
<organism>
    <name type="scientific">Acinetobacter baumannii (strain AB307-0294)</name>
    <dbReference type="NCBI Taxonomy" id="557600"/>
    <lineage>
        <taxon>Bacteria</taxon>
        <taxon>Pseudomonadati</taxon>
        <taxon>Pseudomonadota</taxon>
        <taxon>Gammaproteobacteria</taxon>
        <taxon>Moraxellales</taxon>
        <taxon>Moraxellaceae</taxon>
        <taxon>Acinetobacter</taxon>
        <taxon>Acinetobacter calcoaceticus/baumannii complex</taxon>
    </lineage>
</organism>
<name>G6PI_ACIB3</name>
<reference key="1">
    <citation type="journal article" date="2008" name="J. Bacteriol.">
        <title>Comparative genome sequence analysis of multidrug-resistant Acinetobacter baumannii.</title>
        <authorList>
            <person name="Adams M.D."/>
            <person name="Goglin K."/>
            <person name="Molyneaux N."/>
            <person name="Hujer K.M."/>
            <person name="Lavender H."/>
            <person name="Jamison J.J."/>
            <person name="MacDonald I.J."/>
            <person name="Martin K.M."/>
            <person name="Russo T."/>
            <person name="Campagnari A.A."/>
            <person name="Hujer A.M."/>
            <person name="Bonomo R.A."/>
            <person name="Gill S.R."/>
        </authorList>
    </citation>
    <scope>NUCLEOTIDE SEQUENCE [LARGE SCALE GENOMIC DNA]</scope>
    <source>
        <strain>AB307-0294</strain>
    </source>
</reference>
<evidence type="ECO:0000255" key="1">
    <source>
        <dbReference type="HAMAP-Rule" id="MF_00473"/>
    </source>
</evidence>
<keyword id="KW-0963">Cytoplasm</keyword>
<keyword id="KW-0312">Gluconeogenesis</keyword>
<keyword id="KW-0324">Glycolysis</keyword>
<keyword id="KW-0413">Isomerase</keyword>